<protein>
    <recommendedName>
        <fullName evidence="1">Threonine--tRNA ligase</fullName>
        <ecNumber evidence="1">6.1.1.3</ecNumber>
    </recommendedName>
    <alternativeName>
        <fullName evidence="1">Threonyl-tRNA synthetase</fullName>
        <shortName evidence="1">ThrRS</shortName>
    </alternativeName>
</protein>
<keyword id="KW-0030">Aminoacyl-tRNA synthetase</keyword>
<keyword id="KW-0067">ATP-binding</keyword>
<keyword id="KW-0963">Cytoplasm</keyword>
<keyword id="KW-0436">Ligase</keyword>
<keyword id="KW-0479">Metal-binding</keyword>
<keyword id="KW-0547">Nucleotide-binding</keyword>
<keyword id="KW-0648">Protein biosynthesis</keyword>
<keyword id="KW-0694">RNA-binding</keyword>
<keyword id="KW-0820">tRNA-binding</keyword>
<keyword id="KW-0862">Zinc</keyword>
<organism>
    <name type="scientific">Staphylococcus aureus (strain USA300 / TCH1516)</name>
    <dbReference type="NCBI Taxonomy" id="451516"/>
    <lineage>
        <taxon>Bacteria</taxon>
        <taxon>Bacillati</taxon>
        <taxon>Bacillota</taxon>
        <taxon>Bacilli</taxon>
        <taxon>Bacillales</taxon>
        <taxon>Staphylococcaceae</taxon>
        <taxon>Staphylococcus</taxon>
    </lineage>
</organism>
<comment type="function">
    <text evidence="1">Catalyzes the attachment of threonine to tRNA(Thr) in a two-step reaction: L-threonine is first activated by ATP to form Thr-AMP and then transferred to the acceptor end of tRNA(Thr). Also edits incorrectly charged L-seryl-tRNA(Thr).</text>
</comment>
<comment type="catalytic activity">
    <reaction evidence="1">
        <text>tRNA(Thr) + L-threonine + ATP = L-threonyl-tRNA(Thr) + AMP + diphosphate + H(+)</text>
        <dbReference type="Rhea" id="RHEA:24624"/>
        <dbReference type="Rhea" id="RHEA-COMP:9670"/>
        <dbReference type="Rhea" id="RHEA-COMP:9704"/>
        <dbReference type="ChEBI" id="CHEBI:15378"/>
        <dbReference type="ChEBI" id="CHEBI:30616"/>
        <dbReference type="ChEBI" id="CHEBI:33019"/>
        <dbReference type="ChEBI" id="CHEBI:57926"/>
        <dbReference type="ChEBI" id="CHEBI:78442"/>
        <dbReference type="ChEBI" id="CHEBI:78534"/>
        <dbReference type="ChEBI" id="CHEBI:456215"/>
        <dbReference type="EC" id="6.1.1.3"/>
    </reaction>
</comment>
<comment type="cofactor">
    <cofactor evidence="1">
        <name>Zn(2+)</name>
        <dbReference type="ChEBI" id="CHEBI:29105"/>
    </cofactor>
    <text evidence="1">Binds 1 zinc ion per subunit.</text>
</comment>
<comment type="subunit">
    <text evidence="1">Homodimer.</text>
</comment>
<comment type="subcellular location">
    <subcellularLocation>
        <location evidence="1">Cytoplasm</location>
    </subcellularLocation>
</comment>
<comment type="similarity">
    <text evidence="1">Belongs to the class-II aminoacyl-tRNA synthetase family.</text>
</comment>
<reference key="1">
    <citation type="journal article" date="2007" name="BMC Microbiol.">
        <title>Subtle genetic changes enhance virulence of methicillin resistant and sensitive Staphylococcus aureus.</title>
        <authorList>
            <person name="Highlander S.K."/>
            <person name="Hulten K.G."/>
            <person name="Qin X."/>
            <person name="Jiang H."/>
            <person name="Yerrapragada S."/>
            <person name="Mason E.O. Jr."/>
            <person name="Shang Y."/>
            <person name="Williams T.M."/>
            <person name="Fortunov R.M."/>
            <person name="Liu Y."/>
            <person name="Igboeli O."/>
            <person name="Petrosino J."/>
            <person name="Tirumalai M."/>
            <person name="Uzman A."/>
            <person name="Fox G.E."/>
            <person name="Cardenas A.M."/>
            <person name="Muzny D.M."/>
            <person name="Hemphill L."/>
            <person name="Ding Y."/>
            <person name="Dugan S."/>
            <person name="Blyth P.R."/>
            <person name="Buhay C.J."/>
            <person name="Dinh H.H."/>
            <person name="Hawes A.C."/>
            <person name="Holder M."/>
            <person name="Kovar C.L."/>
            <person name="Lee S.L."/>
            <person name="Liu W."/>
            <person name="Nazareth L.V."/>
            <person name="Wang Q."/>
            <person name="Zhou J."/>
            <person name="Kaplan S.L."/>
            <person name="Weinstock G.M."/>
        </authorList>
    </citation>
    <scope>NUCLEOTIDE SEQUENCE [LARGE SCALE GENOMIC DNA]</scope>
    <source>
        <strain>USA300 / TCH1516</strain>
    </source>
</reference>
<gene>
    <name evidence="1" type="primary">thrS</name>
    <name type="ordered locus">USA300HOU_1669</name>
</gene>
<name>SYT_STAAT</name>
<evidence type="ECO:0000255" key="1">
    <source>
        <dbReference type="HAMAP-Rule" id="MF_00184"/>
    </source>
</evidence>
<evidence type="ECO:0000255" key="2">
    <source>
        <dbReference type="PROSITE-ProRule" id="PRU01228"/>
    </source>
</evidence>
<sequence>MEQINIQFPDGNKKAFDKGTTTEDIAQSISPGLRKKAVAGKFNGQLVDLTKPLETDGSIEIVTPGSEEALEVLRHSTAHLMAHAIKRLYGNVKFGVGPVIEGGFYYDFDIDQNISSDDFEQIEKTMKQIVNENMKIERKVVSRDEAKELFSNDEYKLELIDAIPEDENVTLYSQGDFTDLCRGVHVPSTAKIKEFKLLSTAGAYWRGDSNNKMLQRIYGTAFFDKKELKAHLQMLEERKERDHRKIGKELELFTNSQLVGAGLPLWLPNGATIRREIERYIVDKEVSMGYDHVYTPVLANVDLYKTSGHWDHYQEDMFPPMQLDETESMVLRPMNCPHHMMIYANKPHSYRELPIRIAELGTMHRYEASGAVSGLQRVRGMTLNDSHIFVRPDQIKEEFKRVVNMIIDVYKDFGFEDYSFRLSYRDPEDKEKYFDDDDMWNKAENMLKEAADELGLSYEEAIGEAAFYGPKLDVQVKTAMGKEETLSTAQLDFLLPERFDLTYIGQDGEHHRPVVIHRGVVSTMERFVAFLTEETKGAFPTWLAPKQVQIIPVNVDLHYDYARQLQDELKSQGVRVSIDDRNEKMGYKIREAQMQKIPYQIVVGDKEVENNQVNVRQYGSQDQETVEKDEFIWNLVDEIRLKKHR</sequence>
<feature type="chain" id="PRO_1000077378" description="Threonine--tRNA ligase">
    <location>
        <begin position="1"/>
        <end position="645"/>
    </location>
</feature>
<feature type="domain" description="TGS" evidence="2">
    <location>
        <begin position="1"/>
        <end position="63"/>
    </location>
</feature>
<feature type="region of interest" description="Catalytic" evidence="1">
    <location>
        <begin position="242"/>
        <end position="540"/>
    </location>
</feature>
<feature type="binding site" evidence="1">
    <location>
        <position position="336"/>
    </location>
    <ligand>
        <name>Zn(2+)</name>
        <dbReference type="ChEBI" id="CHEBI:29105"/>
    </ligand>
</feature>
<feature type="binding site" evidence="1">
    <location>
        <position position="387"/>
    </location>
    <ligand>
        <name>Zn(2+)</name>
        <dbReference type="ChEBI" id="CHEBI:29105"/>
    </ligand>
</feature>
<feature type="binding site" evidence="1">
    <location>
        <position position="517"/>
    </location>
    <ligand>
        <name>Zn(2+)</name>
        <dbReference type="ChEBI" id="CHEBI:29105"/>
    </ligand>
</feature>
<accession>A8Z2J8</accession>
<dbReference type="EC" id="6.1.1.3" evidence="1"/>
<dbReference type="EMBL" id="CP000730">
    <property type="protein sequence ID" value="ABX29676.1"/>
    <property type="molecule type" value="Genomic_DNA"/>
</dbReference>
<dbReference type="RefSeq" id="WP_000435132.1">
    <property type="nucleotide sequence ID" value="NC_010079.1"/>
</dbReference>
<dbReference type="SMR" id="A8Z2J8"/>
<dbReference type="KEGG" id="sax:USA300HOU_1669"/>
<dbReference type="HOGENOM" id="CLU_008554_0_1_9"/>
<dbReference type="GO" id="GO:0005737">
    <property type="term" value="C:cytoplasm"/>
    <property type="evidence" value="ECO:0007669"/>
    <property type="project" value="UniProtKB-SubCell"/>
</dbReference>
<dbReference type="GO" id="GO:0005524">
    <property type="term" value="F:ATP binding"/>
    <property type="evidence" value="ECO:0007669"/>
    <property type="project" value="UniProtKB-UniRule"/>
</dbReference>
<dbReference type="GO" id="GO:0140096">
    <property type="term" value="F:catalytic activity, acting on a protein"/>
    <property type="evidence" value="ECO:0007669"/>
    <property type="project" value="UniProtKB-ARBA"/>
</dbReference>
<dbReference type="GO" id="GO:0046872">
    <property type="term" value="F:metal ion binding"/>
    <property type="evidence" value="ECO:0007669"/>
    <property type="project" value="UniProtKB-KW"/>
</dbReference>
<dbReference type="GO" id="GO:0004829">
    <property type="term" value="F:threonine-tRNA ligase activity"/>
    <property type="evidence" value="ECO:0007669"/>
    <property type="project" value="UniProtKB-UniRule"/>
</dbReference>
<dbReference type="GO" id="GO:0016740">
    <property type="term" value="F:transferase activity"/>
    <property type="evidence" value="ECO:0007669"/>
    <property type="project" value="UniProtKB-ARBA"/>
</dbReference>
<dbReference type="GO" id="GO:0000049">
    <property type="term" value="F:tRNA binding"/>
    <property type="evidence" value="ECO:0007669"/>
    <property type="project" value="UniProtKB-KW"/>
</dbReference>
<dbReference type="GO" id="GO:0006435">
    <property type="term" value="P:threonyl-tRNA aminoacylation"/>
    <property type="evidence" value="ECO:0007669"/>
    <property type="project" value="UniProtKB-UniRule"/>
</dbReference>
<dbReference type="CDD" id="cd01667">
    <property type="entry name" value="TGS_ThrRS"/>
    <property type="match status" value="1"/>
</dbReference>
<dbReference type="CDD" id="cd00860">
    <property type="entry name" value="ThrRS_anticodon"/>
    <property type="match status" value="1"/>
</dbReference>
<dbReference type="CDD" id="cd00771">
    <property type="entry name" value="ThrRS_core"/>
    <property type="match status" value="1"/>
</dbReference>
<dbReference type="FunFam" id="3.10.20.30:FF:000005">
    <property type="entry name" value="Threonine--tRNA ligase"/>
    <property type="match status" value="1"/>
</dbReference>
<dbReference type="FunFam" id="3.30.54.20:FF:000002">
    <property type="entry name" value="Threonine--tRNA ligase"/>
    <property type="match status" value="1"/>
</dbReference>
<dbReference type="FunFam" id="3.30.930.10:FF:000002">
    <property type="entry name" value="Threonine--tRNA ligase"/>
    <property type="match status" value="1"/>
</dbReference>
<dbReference type="FunFam" id="3.40.50.800:FF:000001">
    <property type="entry name" value="Threonine--tRNA ligase"/>
    <property type="match status" value="1"/>
</dbReference>
<dbReference type="FunFam" id="3.30.980.10:FF:000005">
    <property type="entry name" value="Threonyl-tRNA synthetase, mitochondrial"/>
    <property type="match status" value="1"/>
</dbReference>
<dbReference type="Gene3D" id="3.10.20.30">
    <property type="match status" value="1"/>
</dbReference>
<dbReference type="Gene3D" id="3.30.54.20">
    <property type="match status" value="1"/>
</dbReference>
<dbReference type="Gene3D" id="3.40.50.800">
    <property type="entry name" value="Anticodon-binding domain"/>
    <property type="match status" value="1"/>
</dbReference>
<dbReference type="Gene3D" id="3.30.930.10">
    <property type="entry name" value="Bira Bifunctional Protein, Domain 2"/>
    <property type="match status" value="1"/>
</dbReference>
<dbReference type="Gene3D" id="3.30.980.10">
    <property type="entry name" value="Threonyl-trna Synthetase, Chain A, domain 2"/>
    <property type="match status" value="1"/>
</dbReference>
<dbReference type="HAMAP" id="MF_00184">
    <property type="entry name" value="Thr_tRNA_synth"/>
    <property type="match status" value="1"/>
</dbReference>
<dbReference type="InterPro" id="IPR002314">
    <property type="entry name" value="aa-tRNA-synt_IIb"/>
</dbReference>
<dbReference type="InterPro" id="IPR006195">
    <property type="entry name" value="aa-tRNA-synth_II"/>
</dbReference>
<dbReference type="InterPro" id="IPR045864">
    <property type="entry name" value="aa-tRNA-synth_II/BPL/LPL"/>
</dbReference>
<dbReference type="InterPro" id="IPR004154">
    <property type="entry name" value="Anticodon-bd"/>
</dbReference>
<dbReference type="InterPro" id="IPR036621">
    <property type="entry name" value="Anticodon-bd_dom_sf"/>
</dbReference>
<dbReference type="InterPro" id="IPR012675">
    <property type="entry name" value="Beta-grasp_dom_sf"/>
</dbReference>
<dbReference type="InterPro" id="IPR004095">
    <property type="entry name" value="TGS"/>
</dbReference>
<dbReference type="InterPro" id="IPR012676">
    <property type="entry name" value="TGS-like"/>
</dbReference>
<dbReference type="InterPro" id="IPR002320">
    <property type="entry name" value="Thr-tRNA-ligase_IIa"/>
</dbReference>
<dbReference type="InterPro" id="IPR018163">
    <property type="entry name" value="Thr/Ala-tRNA-synth_IIc_edit"/>
</dbReference>
<dbReference type="InterPro" id="IPR047246">
    <property type="entry name" value="ThrRS_anticodon"/>
</dbReference>
<dbReference type="InterPro" id="IPR033728">
    <property type="entry name" value="ThrRS_core"/>
</dbReference>
<dbReference type="InterPro" id="IPR012947">
    <property type="entry name" value="tRNA_SAD"/>
</dbReference>
<dbReference type="NCBIfam" id="TIGR00418">
    <property type="entry name" value="thrS"/>
    <property type="match status" value="1"/>
</dbReference>
<dbReference type="PANTHER" id="PTHR11451:SF56">
    <property type="entry name" value="THREONINE--TRNA LIGASE 1"/>
    <property type="match status" value="1"/>
</dbReference>
<dbReference type="PANTHER" id="PTHR11451">
    <property type="entry name" value="THREONINE-TRNA LIGASE"/>
    <property type="match status" value="1"/>
</dbReference>
<dbReference type="Pfam" id="PF03129">
    <property type="entry name" value="HGTP_anticodon"/>
    <property type="match status" value="1"/>
</dbReference>
<dbReference type="Pfam" id="PF02824">
    <property type="entry name" value="TGS"/>
    <property type="match status" value="1"/>
</dbReference>
<dbReference type="Pfam" id="PF00587">
    <property type="entry name" value="tRNA-synt_2b"/>
    <property type="match status" value="1"/>
</dbReference>
<dbReference type="Pfam" id="PF07973">
    <property type="entry name" value="tRNA_SAD"/>
    <property type="match status" value="1"/>
</dbReference>
<dbReference type="PRINTS" id="PR01047">
    <property type="entry name" value="TRNASYNTHTHR"/>
</dbReference>
<dbReference type="SMART" id="SM00863">
    <property type="entry name" value="tRNA_SAD"/>
    <property type="match status" value="1"/>
</dbReference>
<dbReference type="SUPFAM" id="SSF52954">
    <property type="entry name" value="Class II aaRS ABD-related"/>
    <property type="match status" value="1"/>
</dbReference>
<dbReference type="SUPFAM" id="SSF55681">
    <property type="entry name" value="Class II aaRS and biotin synthetases"/>
    <property type="match status" value="1"/>
</dbReference>
<dbReference type="SUPFAM" id="SSF81271">
    <property type="entry name" value="TGS-like"/>
    <property type="match status" value="1"/>
</dbReference>
<dbReference type="SUPFAM" id="SSF55186">
    <property type="entry name" value="ThrRS/AlaRS common domain"/>
    <property type="match status" value="1"/>
</dbReference>
<dbReference type="PROSITE" id="PS50862">
    <property type="entry name" value="AA_TRNA_LIGASE_II"/>
    <property type="match status" value="1"/>
</dbReference>
<dbReference type="PROSITE" id="PS51880">
    <property type="entry name" value="TGS"/>
    <property type="match status" value="1"/>
</dbReference>
<proteinExistence type="inferred from homology"/>